<sequence length="334" mass="37375">MVGREKELSIHFVPGCCQLVEEEVNIPSRRVLITGATGLLGRAVYKEFQQSNWHAVGCGFRRARPKFEQVNLLDSEAVHHLIHDFQPHVIVHCAAERRPDVVESQPDAASQLNVGASGNLAKEAAAIGAFLIYISSDYVFDGTNPPYTEEDIPSPLNLYGKTKLDGEKAVLENNLGAAVLRIPVLYGEVEKLEESAVTVMFDKVQFSNKSANMDHWQQRFPTHVKDVASVCRQLAEKRMLDPSIKGTFHWSGNEQMTKYEMACAIADAFNLPSSHLRPITDSPVIGAQRPKNAQLDCSKLETLGIGQRTPFRIGIKESLWPFLIDKRWRQTVFH</sequence>
<proteinExistence type="evidence at transcript level"/>
<evidence type="ECO:0000250" key="1">
    <source>
        <dbReference type="UniProtKB" id="Q9NZL9"/>
    </source>
</evidence>
<evidence type="ECO:0000305" key="2"/>
<feature type="chain" id="PRO_0000287523" description="Methionine adenosyltransferase 2 subunit beta">
    <location>
        <begin position="1"/>
        <end position="334"/>
    </location>
</feature>
<feature type="region of interest" description="Required for interaction with MAT2A" evidence="1">
    <location>
        <begin position="319"/>
        <end position="334"/>
    </location>
</feature>
<feature type="binding site" evidence="1">
    <location>
        <begin position="37"/>
        <end position="40"/>
    </location>
    <ligand>
        <name>NADP(+)</name>
        <dbReference type="ChEBI" id="CHEBI:58349"/>
    </ligand>
</feature>
<feature type="binding site" evidence="1">
    <location>
        <begin position="60"/>
        <end position="62"/>
    </location>
    <ligand>
        <name>NADP(+)</name>
        <dbReference type="ChEBI" id="CHEBI:58349"/>
    </ligand>
</feature>
<feature type="binding site" evidence="1">
    <location>
        <begin position="71"/>
        <end position="72"/>
    </location>
    <ligand>
        <name>NADP(+)</name>
        <dbReference type="ChEBI" id="CHEBI:58349"/>
    </ligand>
</feature>
<feature type="binding site" evidence="1">
    <location>
        <position position="93"/>
    </location>
    <ligand>
        <name>NADP(+)</name>
        <dbReference type="ChEBI" id="CHEBI:58349"/>
    </ligand>
</feature>
<feature type="binding site" evidence="1">
    <location>
        <position position="97"/>
    </location>
    <ligand>
        <name>NADP(+)</name>
        <dbReference type="ChEBI" id="CHEBI:58349"/>
    </ligand>
</feature>
<feature type="binding site" evidence="1">
    <location>
        <position position="159"/>
    </location>
    <ligand>
        <name>NADP(+)</name>
        <dbReference type="ChEBI" id="CHEBI:58349"/>
    </ligand>
</feature>
<feature type="binding site" evidence="1">
    <location>
        <position position="185"/>
    </location>
    <ligand>
        <name>NADP(+)</name>
        <dbReference type="ChEBI" id="CHEBI:58349"/>
    </ligand>
</feature>
<feature type="modified residue" description="Phosphothreonine" evidence="1">
    <location>
        <position position="309"/>
    </location>
</feature>
<protein>
    <recommendedName>
        <fullName>Methionine adenosyltransferase 2 subunit beta</fullName>
    </recommendedName>
    <alternativeName>
        <fullName>Methionine adenosyltransferase II beta</fullName>
        <shortName>MAT II beta</shortName>
    </alternativeName>
</protein>
<dbReference type="EMBL" id="BC085899">
    <property type="protein sequence ID" value="AAH85899.1"/>
    <property type="molecule type" value="mRNA"/>
</dbReference>
<dbReference type="RefSeq" id="NP_001037747.1">
    <property type="nucleotide sequence ID" value="NM_001044282.1"/>
</dbReference>
<dbReference type="SMR" id="Q5U2R0"/>
<dbReference type="BioGRID" id="598531">
    <property type="interactions" value="1"/>
</dbReference>
<dbReference type="FunCoup" id="Q5U2R0">
    <property type="interactions" value="1864"/>
</dbReference>
<dbReference type="STRING" id="10116.ENSRNOP00000004269"/>
<dbReference type="PhosphoSitePlus" id="Q5U2R0"/>
<dbReference type="jPOST" id="Q5U2R0"/>
<dbReference type="PaxDb" id="10116-ENSRNOP00000004269"/>
<dbReference type="GeneID" id="683630"/>
<dbReference type="KEGG" id="rno:683630"/>
<dbReference type="AGR" id="RGD:1593534"/>
<dbReference type="CTD" id="27430"/>
<dbReference type="RGD" id="1593534">
    <property type="gene designation" value="Mat2b"/>
</dbReference>
<dbReference type="VEuPathDB" id="HostDB:ENSRNOG00000003177"/>
<dbReference type="eggNOG" id="KOG1430">
    <property type="taxonomic scope" value="Eukaryota"/>
</dbReference>
<dbReference type="HOGENOM" id="CLU_045518_0_0_1"/>
<dbReference type="InParanoid" id="Q5U2R0"/>
<dbReference type="OrthoDB" id="2673at9989"/>
<dbReference type="PhylomeDB" id="Q5U2R0"/>
<dbReference type="Reactome" id="R-RNO-156581">
    <property type="pathway name" value="Methylation"/>
</dbReference>
<dbReference type="Reactome" id="R-RNO-5689880">
    <property type="pathway name" value="Ub-specific processing proteases"/>
</dbReference>
<dbReference type="SABIO-RK" id="Q5U2R0"/>
<dbReference type="UniPathway" id="UPA00315">
    <property type="reaction ID" value="UER00080"/>
</dbReference>
<dbReference type="PRO" id="PR:Q5U2R0"/>
<dbReference type="Proteomes" id="UP000002494">
    <property type="component" value="Chromosome 10"/>
</dbReference>
<dbReference type="Bgee" id="ENSRNOG00000003177">
    <property type="expression patterns" value="Expressed in frontal cortex and 20 other cell types or tissues"/>
</dbReference>
<dbReference type="ExpressionAtlas" id="Q5U2R0">
    <property type="expression patterns" value="baseline and differential"/>
</dbReference>
<dbReference type="GO" id="GO:0048269">
    <property type="term" value="C:methionine adenosyltransferase complex"/>
    <property type="evidence" value="ECO:0000250"/>
    <property type="project" value="UniProtKB"/>
</dbReference>
<dbReference type="GO" id="GO:0005634">
    <property type="term" value="C:nucleus"/>
    <property type="evidence" value="ECO:0007669"/>
    <property type="project" value="Ensembl"/>
</dbReference>
<dbReference type="GO" id="GO:0019899">
    <property type="term" value="F:enzyme binding"/>
    <property type="evidence" value="ECO:0000266"/>
    <property type="project" value="RGD"/>
</dbReference>
<dbReference type="GO" id="GO:0048270">
    <property type="term" value="F:methionine adenosyltransferase regulator activity"/>
    <property type="evidence" value="ECO:0000250"/>
    <property type="project" value="UniProtKB"/>
</dbReference>
<dbReference type="GO" id="GO:0006730">
    <property type="term" value="P:one-carbon metabolic process"/>
    <property type="evidence" value="ECO:0007669"/>
    <property type="project" value="UniProtKB-KW"/>
</dbReference>
<dbReference type="GO" id="GO:0006556">
    <property type="term" value="P:S-adenosylmethionine biosynthetic process"/>
    <property type="evidence" value="ECO:0000250"/>
    <property type="project" value="UniProtKB"/>
</dbReference>
<dbReference type="CDD" id="cd05254">
    <property type="entry name" value="dTDP_HR_like_SDR_e"/>
    <property type="match status" value="1"/>
</dbReference>
<dbReference type="FunFam" id="3.40.50.720:FF:000133">
    <property type="entry name" value="Methionine adenosyltransferase 2 subunit beta"/>
    <property type="match status" value="1"/>
</dbReference>
<dbReference type="Gene3D" id="3.40.50.720">
    <property type="entry name" value="NAD(P)-binding Rossmann-like Domain"/>
    <property type="match status" value="1"/>
</dbReference>
<dbReference type="InterPro" id="IPR005913">
    <property type="entry name" value="dTDP_dehydrorham_reduct"/>
</dbReference>
<dbReference type="InterPro" id="IPR036291">
    <property type="entry name" value="NAD(P)-bd_dom_sf"/>
</dbReference>
<dbReference type="InterPro" id="IPR029903">
    <property type="entry name" value="RmlD-like-bd"/>
</dbReference>
<dbReference type="PANTHER" id="PTHR10491">
    <property type="entry name" value="DTDP-4-DEHYDRORHAMNOSE REDUCTASE"/>
    <property type="match status" value="1"/>
</dbReference>
<dbReference type="PANTHER" id="PTHR10491:SF4">
    <property type="entry name" value="METHIONINE ADENOSYLTRANSFERASE 2 SUBUNIT BETA"/>
    <property type="match status" value="1"/>
</dbReference>
<dbReference type="Pfam" id="PF04321">
    <property type="entry name" value="RmlD_sub_bind"/>
    <property type="match status" value="1"/>
</dbReference>
<dbReference type="SUPFAM" id="SSF51735">
    <property type="entry name" value="NAD(P)-binding Rossmann-fold domains"/>
    <property type="match status" value="1"/>
</dbReference>
<gene>
    <name type="primary">Mat2b</name>
</gene>
<keyword id="KW-0521">NADP</keyword>
<keyword id="KW-0554">One-carbon metabolism</keyword>
<keyword id="KW-0597">Phosphoprotein</keyword>
<keyword id="KW-1185">Reference proteome</keyword>
<accession>Q5U2R0</accession>
<comment type="function">
    <text evidence="1">Regulatory subunit of S-adenosylmethionine synthetase 2, an enzyme that catalyzes the formation of S-adenosylmethionine from methionine and ATP. Regulates MAT2A catalytic activity by changing its kinetic properties, increasing its affinity for L-methionine. Can bind NADP (in vitro).</text>
</comment>
<comment type="pathway">
    <text evidence="1">Amino-acid biosynthesis; S-adenosyl-L-methionine biosynthesis; S-adenosyl-L-methionine from L-methionine: step 1/1.</text>
</comment>
<comment type="subunit">
    <text evidence="1">Heterotrimer; composed of a catalytic MAT2A homodimer that binds one regulatory MAT2B chain. Heterohexamer; composed of a central, catalytic MAT2A homotetramer flanked on either side by a regulatory MAT2B chain. NADP binding increases the affinity for MAT2A.</text>
</comment>
<comment type="similarity">
    <text evidence="2">Belongs to the dTDP-4-dehydrorhamnose reductase family. MAT2B subfamily.</text>
</comment>
<name>MAT2B_RAT</name>
<organism>
    <name type="scientific">Rattus norvegicus</name>
    <name type="common">Rat</name>
    <dbReference type="NCBI Taxonomy" id="10116"/>
    <lineage>
        <taxon>Eukaryota</taxon>
        <taxon>Metazoa</taxon>
        <taxon>Chordata</taxon>
        <taxon>Craniata</taxon>
        <taxon>Vertebrata</taxon>
        <taxon>Euteleostomi</taxon>
        <taxon>Mammalia</taxon>
        <taxon>Eutheria</taxon>
        <taxon>Euarchontoglires</taxon>
        <taxon>Glires</taxon>
        <taxon>Rodentia</taxon>
        <taxon>Myomorpha</taxon>
        <taxon>Muroidea</taxon>
        <taxon>Muridae</taxon>
        <taxon>Murinae</taxon>
        <taxon>Rattus</taxon>
    </lineage>
</organism>
<reference key="1">
    <citation type="journal article" date="2004" name="Genome Res.">
        <title>The status, quality, and expansion of the NIH full-length cDNA project: the Mammalian Gene Collection (MGC).</title>
        <authorList>
            <consortium name="The MGC Project Team"/>
        </authorList>
    </citation>
    <scope>NUCLEOTIDE SEQUENCE [LARGE SCALE MRNA]</scope>
    <source>
        <tissue>Heart</tissue>
    </source>
</reference>